<evidence type="ECO:0000255" key="1">
    <source>
        <dbReference type="HAMAP-Rule" id="MF_01306"/>
    </source>
</evidence>
<evidence type="ECO:0000305" key="2"/>
<reference key="1">
    <citation type="journal article" date="2006" name="Lancet">
        <title>Complete genome sequence of USA300, an epidemic clone of community-acquired meticillin-resistant Staphylococcus aureus.</title>
        <authorList>
            <person name="Diep B.A."/>
            <person name="Gill S.R."/>
            <person name="Chang R.F."/>
            <person name="Phan T.H."/>
            <person name="Chen J.H."/>
            <person name="Davidson M.G."/>
            <person name="Lin F."/>
            <person name="Lin J."/>
            <person name="Carleton H.A."/>
            <person name="Mongodin E.F."/>
            <person name="Sensabaugh G.F."/>
            <person name="Perdreau-Remington F."/>
        </authorList>
    </citation>
    <scope>NUCLEOTIDE SEQUENCE [LARGE SCALE GENOMIC DNA]</scope>
    <source>
        <strain>USA300</strain>
    </source>
</reference>
<gene>
    <name evidence="1" type="primary">rpsD</name>
    <name type="ordered locus">SAUSA300_1666</name>
</gene>
<sequence length="200" mass="23013">MARFRGSNWKKSRRLGISLSGTGKELEKRPYAPGQHGPNQRKKLSEYGLQLREKQKLRYLYGMTERQFRNTFDIAGKKFGVHGENFMILLASRLDAVVYSLGLARTRRQARQLVNHGHILVDGKRVDIPSYSVKPGQTISVREKSQKLNIIVESVEINNFVPEYLNFDADSLTGTFVRLPERSELPAEINEQLIVEYYSR</sequence>
<accession>Q2FG18</accession>
<dbReference type="EMBL" id="CP000255">
    <property type="protein sequence ID" value="ABD20402.1"/>
    <property type="molecule type" value="Genomic_DNA"/>
</dbReference>
<dbReference type="RefSeq" id="WP_000090512.1">
    <property type="nucleotide sequence ID" value="NZ_CP027476.1"/>
</dbReference>
<dbReference type="SMR" id="Q2FG18"/>
<dbReference type="KEGG" id="saa:SAUSA300_1666"/>
<dbReference type="HOGENOM" id="CLU_092403_0_1_9"/>
<dbReference type="OMA" id="QLVVELY"/>
<dbReference type="Proteomes" id="UP000001939">
    <property type="component" value="Chromosome"/>
</dbReference>
<dbReference type="GO" id="GO:0015935">
    <property type="term" value="C:small ribosomal subunit"/>
    <property type="evidence" value="ECO:0007669"/>
    <property type="project" value="InterPro"/>
</dbReference>
<dbReference type="GO" id="GO:0019843">
    <property type="term" value="F:rRNA binding"/>
    <property type="evidence" value="ECO:0007669"/>
    <property type="project" value="UniProtKB-UniRule"/>
</dbReference>
<dbReference type="GO" id="GO:0003735">
    <property type="term" value="F:structural constituent of ribosome"/>
    <property type="evidence" value="ECO:0007669"/>
    <property type="project" value="InterPro"/>
</dbReference>
<dbReference type="GO" id="GO:0042274">
    <property type="term" value="P:ribosomal small subunit biogenesis"/>
    <property type="evidence" value="ECO:0007669"/>
    <property type="project" value="TreeGrafter"/>
</dbReference>
<dbReference type="GO" id="GO:0006412">
    <property type="term" value="P:translation"/>
    <property type="evidence" value="ECO:0007669"/>
    <property type="project" value="UniProtKB-UniRule"/>
</dbReference>
<dbReference type="CDD" id="cd00165">
    <property type="entry name" value="S4"/>
    <property type="match status" value="1"/>
</dbReference>
<dbReference type="FunFam" id="1.10.1050.10:FF:000001">
    <property type="entry name" value="30S ribosomal protein S4"/>
    <property type="match status" value="1"/>
</dbReference>
<dbReference type="FunFam" id="3.10.290.10:FF:000001">
    <property type="entry name" value="30S ribosomal protein S4"/>
    <property type="match status" value="1"/>
</dbReference>
<dbReference type="Gene3D" id="1.10.1050.10">
    <property type="entry name" value="Ribosomal Protein S4 Delta 41, Chain A, domain 1"/>
    <property type="match status" value="1"/>
</dbReference>
<dbReference type="Gene3D" id="3.10.290.10">
    <property type="entry name" value="RNA-binding S4 domain"/>
    <property type="match status" value="1"/>
</dbReference>
<dbReference type="HAMAP" id="MF_01306_B">
    <property type="entry name" value="Ribosomal_uS4_B"/>
    <property type="match status" value="1"/>
</dbReference>
<dbReference type="InterPro" id="IPR022801">
    <property type="entry name" value="Ribosomal_uS4"/>
</dbReference>
<dbReference type="InterPro" id="IPR005709">
    <property type="entry name" value="Ribosomal_uS4_bac-type"/>
</dbReference>
<dbReference type="InterPro" id="IPR018079">
    <property type="entry name" value="Ribosomal_uS4_CS"/>
</dbReference>
<dbReference type="InterPro" id="IPR001912">
    <property type="entry name" value="Ribosomal_uS4_N"/>
</dbReference>
<dbReference type="InterPro" id="IPR002942">
    <property type="entry name" value="S4_RNA-bd"/>
</dbReference>
<dbReference type="InterPro" id="IPR036986">
    <property type="entry name" value="S4_RNA-bd_sf"/>
</dbReference>
<dbReference type="NCBIfam" id="NF003717">
    <property type="entry name" value="PRK05327.1"/>
    <property type="match status" value="1"/>
</dbReference>
<dbReference type="NCBIfam" id="TIGR01017">
    <property type="entry name" value="rpsD_bact"/>
    <property type="match status" value="1"/>
</dbReference>
<dbReference type="PANTHER" id="PTHR11831">
    <property type="entry name" value="30S 40S RIBOSOMAL PROTEIN"/>
    <property type="match status" value="1"/>
</dbReference>
<dbReference type="PANTHER" id="PTHR11831:SF4">
    <property type="entry name" value="SMALL RIBOSOMAL SUBUNIT PROTEIN US4M"/>
    <property type="match status" value="1"/>
</dbReference>
<dbReference type="Pfam" id="PF00163">
    <property type="entry name" value="Ribosomal_S4"/>
    <property type="match status" value="1"/>
</dbReference>
<dbReference type="Pfam" id="PF01479">
    <property type="entry name" value="S4"/>
    <property type="match status" value="1"/>
</dbReference>
<dbReference type="SMART" id="SM01390">
    <property type="entry name" value="Ribosomal_S4"/>
    <property type="match status" value="1"/>
</dbReference>
<dbReference type="SMART" id="SM00363">
    <property type="entry name" value="S4"/>
    <property type="match status" value="1"/>
</dbReference>
<dbReference type="SUPFAM" id="SSF55174">
    <property type="entry name" value="Alpha-L RNA-binding motif"/>
    <property type="match status" value="1"/>
</dbReference>
<dbReference type="PROSITE" id="PS00632">
    <property type="entry name" value="RIBOSOMAL_S4"/>
    <property type="match status" value="1"/>
</dbReference>
<dbReference type="PROSITE" id="PS50889">
    <property type="entry name" value="S4"/>
    <property type="match status" value="1"/>
</dbReference>
<comment type="function">
    <text evidence="1">One of the primary rRNA binding proteins, it binds directly to 16S rRNA where it nucleates assembly of the body of the 30S subunit.</text>
</comment>
<comment type="function">
    <text evidence="1">With S5 and S12 plays an important role in translational accuracy.</text>
</comment>
<comment type="subunit">
    <text evidence="1">Part of the 30S ribosomal subunit. Contacts protein S5. The interaction surface between S4 and S5 is involved in control of translational fidelity.</text>
</comment>
<comment type="similarity">
    <text evidence="1">Belongs to the universal ribosomal protein uS4 family.</text>
</comment>
<name>RS4_STAA3</name>
<protein>
    <recommendedName>
        <fullName evidence="1">Small ribosomal subunit protein uS4</fullName>
    </recommendedName>
    <alternativeName>
        <fullName evidence="2">30S ribosomal protein S4</fullName>
    </alternativeName>
</protein>
<keyword id="KW-0687">Ribonucleoprotein</keyword>
<keyword id="KW-0689">Ribosomal protein</keyword>
<keyword id="KW-0694">RNA-binding</keyword>
<keyword id="KW-0699">rRNA-binding</keyword>
<feature type="chain" id="PRO_0000293376" description="Small ribosomal subunit protein uS4">
    <location>
        <begin position="1"/>
        <end position="200"/>
    </location>
</feature>
<feature type="domain" description="S4 RNA-binding" evidence="1">
    <location>
        <begin position="92"/>
        <end position="155"/>
    </location>
</feature>
<proteinExistence type="inferred from homology"/>
<organism>
    <name type="scientific">Staphylococcus aureus (strain USA300)</name>
    <dbReference type="NCBI Taxonomy" id="367830"/>
    <lineage>
        <taxon>Bacteria</taxon>
        <taxon>Bacillati</taxon>
        <taxon>Bacillota</taxon>
        <taxon>Bacilli</taxon>
        <taxon>Bacillales</taxon>
        <taxon>Staphylococcaceae</taxon>
        <taxon>Staphylococcus</taxon>
    </lineage>
</organism>